<comment type="function">
    <text evidence="1">Catalyzes the oxidation of either pyridoxine 5'-phosphate (PNP) or pyridoxamine 5'-phosphate (PMP) into pyridoxal 5'-phosphate (PLP).</text>
</comment>
<comment type="catalytic activity">
    <reaction evidence="1">
        <text>pyridoxamine 5'-phosphate + O2 + H2O = pyridoxal 5'-phosphate + H2O2 + NH4(+)</text>
        <dbReference type="Rhea" id="RHEA:15817"/>
        <dbReference type="ChEBI" id="CHEBI:15377"/>
        <dbReference type="ChEBI" id="CHEBI:15379"/>
        <dbReference type="ChEBI" id="CHEBI:16240"/>
        <dbReference type="ChEBI" id="CHEBI:28938"/>
        <dbReference type="ChEBI" id="CHEBI:58451"/>
        <dbReference type="ChEBI" id="CHEBI:597326"/>
        <dbReference type="EC" id="1.4.3.5"/>
    </reaction>
</comment>
<comment type="catalytic activity">
    <reaction evidence="1">
        <text>pyridoxine 5'-phosphate + O2 = pyridoxal 5'-phosphate + H2O2</text>
        <dbReference type="Rhea" id="RHEA:15149"/>
        <dbReference type="ChEBI" id="CHEBI:15379"/>
        <dbReference type="ChEBI" id="CHEBI:16240"/>
        <dbReference type="ChEBI" id="CHEBI:58589"/>
        <dbReference type="ChEBI" id="CHEBI:597326"/>
        <dbReference type="EC" id="1.4.3.5"/>
    </reaction>
</comment>
<comment type="cofactor">
    <cofactor evidence="1">
        <name>FMN</name>
        <dbReference type="ChEBI" id="CHEBI:58210"/>
    </cofactor>
    <text evidence="1">Binds 1 FMN per subunit.</text>
</comment>
<comment type="pathway">
    <text evidence="1">Cofactor metabolism; pyridoxal 5'-phosphate salvage; pyridoxal 5'-phosphate from pyridoxamine 5'-phosphate: step 1/1.</text>
</comment>
<comment type="pathway">
    <text evidence="1">Cofactor metabolism; pyridoxal 5'-phosphate salvage; pyridoxal 5'-phosphate from pyridoxine 5'-phosphate: step 1/1.</text>
</comment>
<comment type="subunit">
    <text evidence="1">Homodimer.</text>
</comment>
<comment type="similarity">
    <text evidence="1">Belongs to the pyridoxamine 5'-phosphate oxidase family.</text>
</comment>
<organism>
    <name type="scientific">Shigella boydii serotype 18 (strain CDC 3083-94 / BS512)</name>
    <dbReference type="NCBI Taxonomy" id="344609"/>
    <lineage>
        <taxon>Bacteria</taxon>
        <taxon>Pseudomonadati</taxon>
        <taxon>Pseudomonadota</taxon>
        <taxon>Gammaproteobacteria</taxon>
        <taxon>Enterobacterales</taxon>
        <taxon>Enterobacteriaceae</taxon>
        <taxon>Shigella</taxon>
    </lineage>
</organism>
<dbReference type="EC" id="1.4.3.5" evidence="1"/>
<dbReference type="EMBL" id="CP001063">
    <property type="protein sequence ID" value="ACD09647.1"/>
    <property type="molecule type" value="Genomic_DNA"/>
</dbReference>
<dbReference type="RefSeq" id="WP_001282313.1">
    <property type="nucleotide sequence ID" value="NC_010658.1"/>
</dbReference>
<dbReference type="SMR" id="B2U2D8"/>
<dbReference type="STRING" id="344609.SbBS512_E1830"/>
<dbReference type="GeneID" id="93775792"/>
<dbReference type="KEGG" id="sbc:SbBS512_E1830"/>
<dbReference type="HOGENOM" id="CLU_032263_2_2_6"/>
<dbReference type="UniPathway" id="UPA01068">
    <property type="reaction ID" value="UER00304"/>
</dbReference>
<dbReference type="UniPathway" id="UPA01068">
    <property type="reaction ID" value="UER00305"/>
</dbReference>
<dbReference type="Proteomes" id="UP000001030">
    <property type="component" value="Chromosome"/>
</dbReference>
<dbReference type="GO" id="GO:0010181">
    <property type="term" value="F:FMN binding"/>
    <property type="evidence" value="ECO:0007669"/>
    <property type="project" value="UniProtKB-UniRule"/>
</dbReference>
<dbReference type="GO" id="GO:0004733">
    <property type="term" value="F:pyridoxamine phosphate oxidase activity"/>
    <property type="evidence" value="ECO:0007669"/>
    <property type="project" value="UniProtKB-UniRule"/>
</dbReference>
<dbReference type="GO" id="GO:0008615">
    <property type="term" value="P:pyridoxine biosynthetic process"/>
    <property type="evidence" value="ECO:0007669"/>
    <property type="project" value="UniProtKB-KW"/>
</dbReference>
<dbReference type="FunFam" id="2.30.110.10:FF:000001">
    <property type="entry name" value="Pyridoxine/pyridoxamine 5'-phosphate oxidase"/>
    <property type="match status" value="1"/>
</dbReference>
<dbReference type="Gene3D" id="2.30.110.10">
    <property type="entry name" value="Electron Transport, Fmn-binding Protein, Chain A"/>
    <property type="match status" value="1"/>
</dbReference>
<dbReference type="HAMAP" id="MF_01629">
    <property type="entry name" value="PdxH"/>
    <property type="match status" value="1"/>
</dbReference>
<dbReference type="InterPro" id="IPR000659">
    <property type="entry name" value="Pyridox_Oxase"/>
</dbReference>
<dbReference type="InterPro" id="IPR019740">
    <property type="entry name" value="Pyridox_Oxase_CS"/>
</dbReference>
<dbReference type="InterPro" id="IPR011576">
    <property type="entry name" value="Pyridox_Oxase_N"/>
</dbReference>
<dbReference type="InterPro" id="IPR019576">
    <property type="entry name" value="Pyridoxamine_oxidase_dimer_C"/>
</dbReference>
<dbReference type="InterPro" id="IPR012349">
    <property type="entry name" value="Split_barrel_FMN-bd"/>
</dbReference>
<dbReference type="NCBIfam" id="TIGR00558">
    <property type="entry name" value="pdxH"/>
    <property type="match status" value="1"/>
</dbReference>
<dbReference type="NCBIfam" id="NF004231">
    <property type="entry name" value="PRK05679.1"/>
    <property type="match status" value="1"/>
</dbReference>
<dbReference type="PANTHER" id="PTHR10851:SF0">
    <property type="entry name" value="PYRIDOXINE-5'-PHOSPHATE OXIDASE"/>
    <property type="match status" value="1"/>
</dbReference>
<dbReference type="PANTHER" id="PTHR10851">
    <property type="entry name" value="PYRIDOXINE-5-PHOSPHATE OXIDASE"/>
    <property type="match status" value="1"/>
</dbReference>
<dbReference type="Pfam" id="PF10590">
    <property type="entry name" value="PNP_phzG_C"/>
    <property type="match status" value="1"/>
</dbReference>
<dbReference type="Pfam" id="PF01243">
    <property type="entry name" value="PNPOx_N"/>
    <property type="match status" value="1"/>
</dbReference>
<dbReference type="PIRSF" id="PIRSF000190">
    <property type="entry name" value="Pyd_amn-ph_oxd"/>
    <property type="match status" value="1"/>
</dbReference>
<dbReference type="SUPFAM" id="SSF50475">
    <property type="entry name" value="FMN-binding split barrel"/>
    <property type="match status" value="1"/>
</dbReference>
<dbReference type="PROSITE" id="PS01064">
    <property type="entry name" value="PYRIDOX_OXIDASE"/>
    <property type="match status" value="1"/>
</dbReference>
<evidence type="ECO:0000255" key="1">
    <source>
        <dbReference type="HAMAP-Rule" id="MF_01629"/>
    </source>
</evidence>
<proteinExistence type="inferred from homology"/>
<reference key="1">
    <citation type="submission" date="2008-05" db="EMBL/GenBank/DDBJ databases">
        <title>Complete sequence of Shigella boydii serotype 18 strain BS512.</title>
        <authorList>
            <person name="Rasko D.A."/>
            <person name="Rosovitz M."/>
            <person name="Maurelli A.T."/>
            <person name="Myers G."/>
            <person name="Seshadri R."/>
            <person name="Cer R."/>
            <person name="Jiang L."/>
            <person name="Ravel J."/>
            <person name="Sebastian Y."/>
        </authorList>
    </citation>
    <scope>NUCLEOTIDE SEQUENCE [LARGE SCALE GENOMIC DNA]</scope>
    <source>
        <strain>CDC 3083-94 / BS512</strain>
    </source>
</reference>
<accession>B2U2D8</accession>
<sequence>MSDNDELQQIAHLRREYTKGGLRRRDLPADPLTLFERWLSQACEAKLADPTAMVVATVDEHAQPYQRIVLLKHYDEKGMVFYTNLGSRKAHQIENNPRVSLLFPWHTLERQVMVIGKAERLSTLEVMKYFHSRPRDSQIGAWVSKQSSRISARGILESKFLELKQKFQQGEVPLPSFWGGFRVSLEQIEFWQGGEHRLHDRFLYQRENDAWKIDRLAP</sequence>
<keyword id="KW-0285">Flavoprotein</keyword>
<keyword id="KW-0288">FMN</keyword>
<keyword id="KW-0560">Oxidoreductase</keyword>
<keyword id="KW-0664">Pyridoxine biosynthesis</keyword>
<keyword id="KW-1185">Reference proteome</keyword>
<gene>
    <name evidence="1" type="primary">pdxH</name>
    <name type="ordered locus">SbBS512_E1830</name>
</gene>
<name>PDXH_SHIB3</name>
<protein>
    <recommendedName>
        <fullName evidence="1">Pyridoxine/pyridoxamine 5'-phosphate oxidase</fullName>
        <ecNumber evidence="1">1.4.3.5</ecNumber>
    </recommendedName>
    <alternativeName>
        <fullName evidence="1">PNP/PMP oxidase</fullName>
        <shortName evidence="1">PNPOx</shortName>
    </alternativeName>
    <alternativeName>
        <fullName evidence="1">Pyridoxal 5'-phosphate synthase</fullName>
    </alternativeName>
</protein>
<feature type="chain" id="PRO_1000186343" description="Pyridoxine/pyridoxamine 5'-phosphate oxidase">
    <location>
        <begin position="1"/>
        <end position="218"/>
    </location>
</feature>
<feature type="binding site" evidence="1">
    <location>
        <begin position="14"/>
        <end position="17"/>
    </location>
    <ligand>
        <name>substrate</name>
    </ligand>
</feature>
<feature type="binding site" evidence="1">
    <location>
        <begin position="67"/>
        <end position="72"/>
    </location>
    <ligand>
        <name>FMN</name>
        <dbReference type="ChEBI" id="CHEBI:58210"/>
    </ligand>
</feature>
<feature type="binding site" evidence="1">
    <location>
        <position position="72"/>
    </location>
    <ligand>
        <name>substrate</name>
    </ligand>
</feature>
<feature type="binding site" evidence="1">
    <location>
        <begin position="82"/>
        <end position="83"/>
    </location>
    <ligand>
        <name>FMN</name>
        <dbReference type="ChEBI" id="CHEBI:58210"/>
    </ligand>
</feature>
<feature type="binding site" evidence="1">
    <location>
        <position position="88"/>
    </location>
    <ligand>
        <name>FMN</name>
        <dbReference type="ChEBI" id="CHEBI:58210"/>
    </ligand>
</feature>
<feature type="binding site" evidence="1">
    <location>
        <position position="89"/>
    </location>
    <ligand>
        <name>FMN</name>
        <dbReference type="ChEBI" id="CHEBI:58210"/>
    </ligand>
</feature>
<feature type="binding site" evidence="1">
    <location>
        <position position="111"/>
    </location>
    <ligand>
        <name>FMN</name>
        <dbReference type="ChEBI" id="CHEBI:58210"/>
    </ligand>
</feature>
<feature type="binding site" evidence="1">
    <location>
        <position position="129"/>
    </location>
    <ligand>
        <name>substrate</name>
    </ligand>
</feature>
<feature type="binding site" evidence="1">
    <location>
        <position position="133"/>
    </location>
    <ligand>
        <name>substrate</name>
    </ligand>
</feature>
<feature type="binding site" evidence="1">
    <location>
        <position position="137"/>
    </location>
    <ligand>
        <name>substrate</name>
    </ligand>
</feature>
<feature type="binding site" evidence="1">
    <location>
        <begin position="146"/>
        <end position="147"/>
    </location>
    <ligand>
        <name>FMN</name>
        <dbReference type="ChEBI" id="CHEBI:58210"/>
    </ligand>
</feature>
<feature type="binding site" evidence="1">
    <location>
        <position position="191"/>
    </location>
    <ligand>
        <name>FMN</name>
        <dbReference type="ChEBI" id="CHEBI:58210"/>
    </ligand>
</feature>
<feature type="binding site" evidence="1">
    <location>
        <begin position="197"/>
        <end position="199"/>
    </location>
    <ligand>
        <name>substrate</name>
    </ligand>
</feature>
<feature type="binding site" evidence="1">
    <location>
        <position position="201"/>
    </location>
    <ligand>
        <name>FMN</name>
        <dbReference type="ChEBI" id="CHEBI:58210"/>
    </ligand>
</feature>